<organism>
    <name type="scientific">Brachybacterium faecium (strain ATCC 43885 / DSM 4810 / JCM 11609 / LMG 19847 / NBRC 14762 / NCIMB 9860 / 6-10)</name>
    <dbReference type="NCBI Taxonomy" id="446465"/>
    <lineage>
        <taxon>Bacteria</taxon>
        <taxon>Bacillati</taxon>
        <taxon>Actinomycetota</taxon>
        <taxon>Actinomycetes</taxon>
        <taxon>Micrococcales</taxon>
        <taxon>Dermabacteraceae</taxon>
        <taxon>Brachybacterium</taxon>
    </lineage>
</organism>
<dbReference type="EC" id="6.3.1.13" evidence="1"/>
<dbReference type="EMBL" id="CP001643">
    <property type="protein sequence ID" value="ACU85451.1"/>
    <property type="molecule type" value="Genomic_DNA"/>
</dbReference>
<dbReference type="RefSeq" id="YP_003155041.1">
    <property type="nucleotide sequence ID" value="NC_013172.1"/>
</dbReference>
<dbReference type="SMR" id="C7MCZ4"/>
<dbReference type="STRING" id="446465.Bfae_16240"/>
<dbReference type="KEGG" id="bfa:Bfae_16240"/>
<dbReference type="PATRIC" id="fig|446465.5.peg.1618"/>
<dbReference type="eggNOG" id="COG0215">
    <property type="taxonomic scope" value="Bacteria"/>
</dbReference>
<dbReference type="HOGENOM" id="CLU_013528_0_0_11"/>
<dbReference type="OrthoDB" id="9815130at2"/>
<dbReference type="Proteomes" id="UP000001919">
    <property type="component" value="Chromosome"/>
</dbReference>
<dbReference type="GO" id="GO:0005829">
    <property type="term" value="C:cytosol"/>
    <property type="evidence" value="ECO:0007669"/>
    <property type="project" value="TreeGrafter"/>
</dbReference>
<dbReference type="GO" id="GO:0005524">
    <property type="term" value="F:ATP binding"/>
    <property type="evidence" value="ECO:0007669"/>
    <property type="project" value="UniProtKB-KW"/>
</dbReference>
<dbReference type="GO" id="GO:0035446">
    <property type="term" value="F:cysteine-glucosaminylinositol ligase activity"/>
    <property type="evidence" value="ECO:0007669"/>
    <property type="project" value="UniProtKB-UniRule"/>
</dbReference>
<dbReference type="GO" id="GO:0004817">
    <property type="term" value="F:cysteine-tRNA ligase activity"/>
    <property type="evidence" value="ECO:0007669"/>
    <property type="project" value="TreeGrafter"/>
</dbReference>
<dbReference type="GO" id="GO:0008270">
    <property type="term" value="F:zinc ion binding"/>
    <property type="evidence" value="ECO:0007669"/>
    <property type="project" value="UniProtKB-UniRule"/>
</dbReference>
<dbReference type="GO" id="GO:0006423">
    <property type="term" value="P:cysteinyl-tRNA aminoacylation"/>
    <property type="evidence" value="ECO:0007669"/>
    <property type="project" value="TreeGrafter"/>
</dbReference>
<dbReference type="GO" id="GO:0010125">
    <property type="term" value="P:mycothiol biosynthetic process"/>
    <property type="evidence" value="ECO:0007669"/>
    <property type="project" value="UniProtKB-UniRule"/>
</dbReference>
<dbReference type="Gene3D" id="1.20.120.640">
    <property type="entry name" value="Anticodon-binding domain of a subclass of class I aminoacyl-tRNA synthetases"/>
    <property type="match status" value="1"/>
</dbReference>
<dbReference type="Gene3D" id="3.40.50.620">
    <property type="entry name" value="HUPs"/>
    <property type="match status" value="1"/>
</dbReference>
<dbReference type="HAMAP" id="MF_01697">
    <property type="entry name" value="MshC"/>
    <property type="match status" value="1"/>
</dbReference>
<dbReference type="InterPro" id="IPR024909">
    <property type="entry name" value="Cys-tRNA/MSH_ligase"/>
</dbReference>
<dbReference type="InterPro" id="IPR017812">
    <property type="entry name" value="Mycothiol_ligase_MshC"/>
</dbReference>
<dbReference type="InterPro" id="IPR014729">
    <property type="entry name" value="Rossmann-like_a/b/a_fold"/>
</dbReference>
<dbReference type="InterPro" id="IPR032678">
    <property type="entry name" value="tRNA-synt_1_cat_dom"/>
</dbReference>
<dbReference type="NCBIfam" id="TIGR03447">
    <property type="entry name" value="mycothiol_MshC"/>
    <property type="match status" value="1"/>
</dbReference>
<dbReference type="PANTHER" id="PTHR10890:SF3">
    <property type="entry name" value="CYSTEINE--TRNA LIGASE, CYTOPLASMIC"/>
    <property type="match status" value="1"/>
</dbReference>
<dbReference type="PANTHER" id="PTHR10890">
    <property type="entry name" value="CYSTEINYL-TRNA SYNTHETASE"/>
    <property type="match status" value="1"/>
</dbReference>
<dbReference type="Pfam" id="PF01406">
    <property type="entry name" value="tRNA-synt_1e"/>
    <property type="match status" value="1"/>
</dbReference>
<dbReference type="PRINTS" id="PR00983">
    <property type="entry name" value="TRNASYNTHCYS"/>
</dbReference>
<dbReference type="SUPFAM" id="SSF52374">
    <property type="entry name" value="Nucleotidylyl transferase"/>
    <property type="match status" value="1"/>
</dbReference>
<gene>
    <name evidence="1" type="primary">mshC</name>
    <name type="ordered locus">Bfae_16240</name>
</gene>
<evidence type="ECO:0000255" key="1">
    <source>
        <dbReference type="HAMAP-Rule" id="MF_01697"/>
    </source>
</evidence>
<proteinExistence type="inferred from homology"/>
<comment type="function">
    <text evidence="1">Catalyzes the ATP-dependent condensation of GlcN-Ins and L-cysteine to form L-Cys-GlcN-Ins.</text>
</comment>
<comment type="catalytic activity">
    <reaction evidence="1">
        <text>1D-myo-inositol 2-amino-2-deoxy-alpha-D-glucopyranoside + L-cysteine + ATP = 1D-myo-inositol 2-(L-cysteinylamino)-2-deoxy-alpha-D-glucopyranoside + AMP + diphosphate + H(+)</text>
        <dbReference type="Rhea" id="RHEA:26176"/>
        <dbReference type="ChEBI" id="CHEBI:15378"/>
        <dbReference type="ChEBI" id="CHEBI:30616"/>
        <dbReference type="ChEBI" id="CHEBI:33019"/>
        <dbReference type="ChEBI" id="CHEBI:35235"/>
        <dbReference type="ChEBI" id="CHEBI:58886"/>
        <dbReference type="ChEBI" id="CHEBI:58887"/>
        <dbReference type="ChEBI" id="CHEBI:456215"/>
        <dbReference type="EC" id="6.3.1.13"/>
    </reaction>
</comment>
<comment type="cofactor">
    <cofactor evidence="1">
        <name>Zn(2+)</name>
        <dbReference type="ChEBI" id="CHEBI:29105"/>
    </cofactor>
    <text evidence="1">Binds 1 zinc ion per subunit.</text>
</comment>
<comment type="subunit">
    <text evidence="1">Monomer.</text>
</comment>
<comment type="similarity">
    <text evidence="1">Belongs to the class-I aminoacyl-tRNA synthetase family. MshC subfamily.</text>
</comment>
<feature type="chain" id="PRO_0000400432" description="L-cysteine:1D-myo-inositol 2-amino-2-deoxy-alpha-D-glucopyranoside ligase">
    <location>
        <begin position="1"/>
        <end position="416"/>
    </location>
</feature>
<feature type="short sequence motif" description="'HIGH' region" evidence="1">
    <location>
        <begin position="47"/>
        <end position="57"/>
    </location>
</feature>
<feature type="short sequence motif" description="'ERGGDP' region" evidence="1">
    <location>
        <begin position="191"/>
        <end position="196"/>
    </location>
</feature>
<feature type="short sequence motif" description="'KMSKS' region" evidence="1">
    <location>
        <begin position="292"/>
        <end position="296"/>
    </location>
</feature>
<feature type="binding site" evidence="1">
    <location>
        <begin position="45"/>
        <end position="48"/>
    </location>
    <ligand>
        <name>L-cysteinyl-5'-AMP</name>
        <dbReference type="ChEBI" id="CHEBI:144924"/>
    </ligand>
</feature>
<feature type="binding site" evidence="1">
    <location>
        <position position="45"/>
    </location>
    <ligand>
        <name>Zn(2+)</name>
        <dbReference type="ChEBI" id="CHEBI:29105"/>
    </ligand>
</feature>
<feature type="binding site" evidence="1">
    <location>
        <position position="60"/>
    </location>
    <ligand>
        <name>L-cysteinyl-5'-AMP</name>
        <dbReference type="ChEBI" id="CHEBI:144924"/>
    </ligand>
</feature>
<feature type="binding site" evidence="1">
    <location>
        <begin position="83"/>
        <end position="85"/>
    </location>
    <ligand>
        <name>L-cysteinyl-5'-AMP</name>
        <dbReference type="ChEBI" id="CHEBI:144924"/>
    </ligand>
</feature>
<feature type="binding site" evidence="1">
    <location>
        <position position="232"/>
    </location>
    <ligand>
        <name>L-cysteinyl-5'-AMP</name>
        <dbReference type="ChEBI" id="CHEBI:144924"/>
    </ligand>
</feature>
<feature type="binding site" evidence="1">
    <location>
        <position position="236"/>
    </location>
    <ligand>
        <name>Zn(2+)</name>
        <dbReference type="ChEBI" id="CHEBI:29105"/>
    </ligand>
</feature>
<feature type="binding site" evidence="1">
    <location>
        <begin position="254"/>
        <end position="256"/>
    </location>
    <ligand>
        <name>L-cysteinyl-5'-AMP</name>
        <dbReference type="ChEBI" id="CHEBI:144924"/>
    </ligand>
</feature>
<feature type="binding site" evidence="1">
    <location>
        <position position="261"/>
    </location>
    <ligand>
        <name>Zn(2+)</name>
        <dbReference type="ChEBI" id="CHEBI:29105"/>
    </ligand>
</feature>
<feature type="binding site" evidence="1">
    <location>
        <position position="286"/>
    </location>
    <ligand>
        <name>L-cysteinyl-5'-AMP</name>
        <dbReference type="ChEBI" id="CHEBI:144924"/>
    </ligand>
</feature>
<protein>
    <recommendedName>
        <fullName evidence="1">L-cysteine:1D-myo-inositol 2-amino-2-deoxy-alpha-D-glucopyranoside ligase</fullName>
        <shortName evidence="1">L-Cys:GlcN-Ins ligase</shortName>
        <ecNumber evidence="1">6.3.1.13</ecNumber>
    </recommendedName>
    <alternativeName>
        <fullName evidence="1">Mycothiol ligase</fullName>
        <shortName evidence="1">MSH ligase</shortName>
    </alternativeName>
</protein>
<sequence length="416" mass="44954">MRSWTSPALAPLPASGLPLRLHDTRTGRITPVVPLTPGTARLYVCGITPYDSTHLGHAATYHAADLMRRALRDSGLAVEMAQNVTDVDDPLLERADRDGVDWRELAASQSALFAEDMEALRVIAPETYRSVSEAMDEIIAVVLALHARGRAYPVEAADAAGPDWYLDLAADGALGDVSGWSEEQMLAVFAERGGDPDREGKRGRFDPLLWSAEREGEPAWDAGVLGRGRPGWHVECVCIAEEGIGLPFDVQAGGSDLIFPHHDLSAAHSVALGRPFAAAYAHSGMVGYQGEKMSKSLGNLVFVHRLVREGTDPMVIRLVLMAHHYRSDWEWTDGELDRAAERLKSYRLAARRGDHRPATVEALRAALRDDLDTVRALEALDAWAEGGSSSGAETDPAAPGDVPTAMDALFGITLQS</sequence>
<reference key="1">
    <citation type="journal article" date="2009" name="Stand. Genomic Sci.">
        <title>Complete genome sequence of Brachybacterium faecium type strain (Schefferle 6-10).</title>
        <authorList>
            <person name="Lapidus A."/>
            <person name="Pukall R."/>
            <person name="Labuttii K."/>
            <person name="Copeland A."/>
            <person name="Del Rio T.G."/>
            <person name="Nolan M."/>
            <person name="Chen F."/>
            <person name="Lucas S."/>
            <person name="Tice H."/>
            <person name="Cheng J.F."/>
            <person name="Bruce D."/>
            <person name="Goodwin L."/>
            <person name="Pitluck S."/>
            <person name="Rohde M."/>
            <person name="Goker M."/>
            <person name="Pati A."/>
            <person name="Ivanova N."/>
            <person name="Mavrommatis K."/>
            <person name="Chen A."/>
            <person name="Palaniappan K."/>
            <person name="D'haeseleer P."/>
            <person name="Chain P."/>
            <person name="Bristow J."/>
            <person name="Eisen J.A."/>
            <person name="Markowitz V."/>
            <person name="Hugenholtz P."/>
            <person name="Kyrpides N.C."/>
            <person name="Klenk H.P."/>
        </authorList>
    </citation>
    <scope>NUCLEOTIDE SEQUENCE [LARGE SCALE GENOMIC DNA]</scope>
    <source>
        <strain>ATCC 43885 / DSM 4810 / JCM 11609 / LMG 19847 / NBRC 14762 / NCIMB 9860 / 6-10</strain>
    </source>
</reference>
<accession>C7MCZ4</accession>
<keyword id="KW-0067">ATP-binding</keyword>
<keyword id="KW-0436">Ligase</keyword>
<keyword id="KW-0479">Metal-binding</keyword>
<keyword id="KW-0547">Nucleotide-binding</keyword>
<keyword id="KW-1185">Reference proteome</keyword>
<keyword id="KW-0862">Zinc</keyword>
<name>MSHC_BRAFD</name>